<gene>
    <name evidence="1" type="primary">metG</name>
    <name type="ordered locus">Ecok1_20240</name>
    <name type="ORF">APECO1_4433</name>
</gene>
<comment type="function">
    <text evidence="1">Is required not only for elongation of protein synthesis but also for the initiation of all mRNA translation through initiator tRNA(fMet) aminoacylation.</text>
</comment>
<comment type="catalytic activity">
    <reaction evidence="1">
        <text>tRNA(Met) + L-methionine + ATP = L-methionyl-tRNA(Met) + AMP + diphosphate</text>
        <dbReference type="Rhea" id="RHEA:13481"/>
        <dbReference type="Rhea" id="RHEA-COMP:9667"/>
        <dbReference type="Rhea" id="RHEA-COMP:9698"/>
        <dbReference type="ChEBI" id="CHEBI:30616"/>
        <dbReference type="ChEBI" id="CHEBI:33019"/>
        <dbReference type="ChEBI" id="CHEBI:57844"/>
        <dbReference type="ChEBI" id="CHEBI:78442"/>
        <dbReference type="ChEBI" id="CHEBI:78530"/>
        <dbReference type="ChEBI" id="CHEBI:456215"/>
        <dbReference type="EC" id="6.1.1.10"/>
    </reaction>
</comment>
<comment type="cofactor">
    <cofactor evidence="1">
        <name>Zn(2+)</name>
        <dbReference type="ChEBI" id="CHEBI:29105"/>
    </cofactor>
    <text evidence="1">Binds 1 zinc ion per subunit.</text>
</comment>
<comment type="subunit">
    <text evidence="1">Homodimer.</text>
</comment>
<comment type="subcellular location">
    <subcellularLocation>
        <location evidence="1">Cytoplasm</location>
    </subcellularLocation>
</comment>
<comment type="similarity">
    <text evidence="1">Belongs to the class-I aminoacyl-tRNA synthetase family. MetG type 1 subfamily.</text>
</comment>
<comment type="sequence caution" evidence="2">
    <conflict type="erroneous initiation">
        <sequence resource="EMBL-CDS" id="ABJ01518"/>
    </conflict>
</comment>
<evidence type="ECO:0000255" key="1">
    <source>
        <dbReference type="HAMAP-Rule" id="MF_00098"/>
    </source>
</evidence>
<evidence type="ECO:0000305" key="2"/>
<accession>A1ACX8</accession>
<reference key="1">
    <citation type="journal article" date="2007" name="J. Bacteriol.">
        <title>The genome sequence of avian pathogenic Escherichia coli strain O1:K1:H7 shares strong similarities with human extraintestinal pathogenic E. coli genomes.</title>
        <authorList>
            <person name="Johnson T.J."/>
            <person name="Kariyawasam S."/>
            <person name="Wannemuehler Y."/>
            <person name="Mangiamele P."/>
            <person name="Johnson S.J."/>
            <person name="Doetkott C."/>
            <person name="Skyberg J.A."/>
            <person name="Lynne A.M."/>
            <person name="Johnson J.R."/>
            <person name="Nolan L.K."/>
        </authorList>
    </citation>
    <scope>NUCLEOTIDE SEQUENCE [LARGE SCALE GENOMIC DNA]</scope>
</reference>
<sequence length="677" mass="76284">MTQVAKKILVTCALPYANGSIHLGHMLEHIQADVWVRYQRMRGHEVNFICADDAHGTPIMLKAQQLGITPEQMIGEMSQEHQTDFAGFNISYDNYHSTHSEENRQLSELIYSRLKENGFIKNRTISQLYDPEKGMFLPDRFVKGTCPKCKSPDQYGDNCEVCGATYSPTELIEPKSVVSGATPVMRDSEHFFFDLPSFSEMLQAWTRSGALQEQVANKMQEWFESGLQQWDISRDAPYFGFEIPNAPGKYFYVWLDAPIGYMGSFKNLCDKRGDSVSFDKYWKKDSTAELYHFIGKDIVYFHSLFWPAMLEGSNFRKPTNLFVHGYVTVNGAKMSKSRGTFIKASTWLNHFDADSLRYYYTAKLSSRIDDIDLNLEDFVQRVNADIVNKVVNLASRNAGFINKRFDGVLASELADPQLYKTFTDAAEVIGEAWESREFGKAIREIMALADLANRYVDEQAPWVVAKQEGRDADLQAICSMGINLFRVLMTYLKPVLPKLTERAEAFLNTELTWDGIQQPLLGHKVNPFKALYNRIDMKQVEALVEASKEEVKATAAPVTGPLADDPIQETITFDDFAKVDLRVALIENAEFVEGSDKLLRLTLDLGGEKRNVFSGIRSAYPDPQALIGRHTIMVANLAPRKMRFGISEGMVMAAGPGGKDIFLLSPDAGAKPGHQVK</sequence>
<dbReference type="EC" id="6.1.1.10" evidence="1"/>
<dbReference type="EMBL" id="CP000468">
    <property type="protein sequence ID" value="ABJ01518.1"/>
    <property type="status" value="ALT_INIT"/>
    <property type="molecule type" value="Genomic_DNA"/>
</dbReference>
<dbReference type="RefSeq" id="WP_001350700.1">
    <property type="nucleotide sequence ID" value="NZ_CADILS010000004.1"/>
</dbReference>
<dbReference type="SMR" id="A1ACX8"/>
<dbReference type="KEGG" id="ecv:APECO1_4433"/>
<dbReference type="HOGENOM" id="CLU_009710_7_0_6"/>
<dbReference type="Proteomes" id="UP000008216">
    <property type="component" value="Chromosome"/>
</dbReference>
<dbReference type="GO" id="GO:0005829">
    <property type="term" value="C:cytosol"/>
    <property type="evidence" value="ECO:0007669"/>
    <property type="project" value="TreeGrafter"/>
</dbReference>
<dbReference type="GO" id="GO:0005524">
    <property type="term" value="F:ATP binding"/>
    <property type="evidence" value="ECO:0007669"/>
    <property type="project" value="UniProtKB-UniRule"/>
</dbReference>
<dbReference type="GO" id="GO:0046872">
    <property type="term" value="F:metal ion binding"/>
    <property type="evidence" value="ECO:0007669"/>
    <property type="project" value="UniProtKB-KW"/>
</dbReference>
<dbReference type="GO" id="GO:0004825">
    <property type="term" value="F:methionine-tRNA ligase activity"/>
    <property type="evidence" value="ECO:0007669"/>
    <property type="project" value="UniProtKB-UniRule"/>
</dbReference>
<dbReference type="GO" id="GO:0000049">
    <property type="term" value="F:tRNA binding"/>
    <property type="evidence" value="ECO:0007669"/>
    <property type="project" value="UniProtKB-KW"/>
</dbReference>
<dbReference type="GO" id="GO:0006431">
    <property type="term" value="P:methionyl-tRNA aminoacylation"/>
    <property type="evidence" value="ECO:0007669"/>
    <property type="project" value="UniProtKB-UniRule"/>
</dbReference>
<dbReference type="CDD" id="cd07957">
    <property type="entry name" value="Anticodon_Ia_Met"/>
    <property type="match status" value="1"/>
</dbReference>
<dbReference type="CDD" id="cd00814">
    <property type="entry name" value="MetRS_core"/>
    <property type="match status" value="1"/>
</dbReference>
<dbReference type="CDD" id="cd02800">
    <property type="entry name" value="tRNA_bind_EcMetRS_like"/>
    <property type="match status" value="1"/>
</dbReference>
<dbReference type="FunFam" id="1.10.730.10:FF:000005">
    <property type="entry name" value="Methionine--tRNA ligase"/>
    <property type="match status" value="1"/>
</dbReference>
<dbReference type="FunFam" id="2.20.28.20:FF:000001">
    <property type="entry name" value="Methionine--tRNA ligase"/>
    <property type="match status" value="1"/>
</dbReference>
<dbReference type="FunFam" id="2.40.50.140:FF:000042">
    <property type="entry name" value="Methionine--tRNA ligase"/>
    <property type="match status" value="1"/>
</dbReference>
<dbReference type="Gene3D" id="3.40.50.620">
    <property type="entry name" value="HUPs"/>
    <property type="match status" value="1"/>
</dbReference>
<dbReference type="Gene3D" id="1.10.730.10">
    <property type="entry name" value="Isoleucyl-tRNA Synthetase, Domain 1"/>
    <property type="match status" value="1"/>
</dbReference>
<dbReference type="Gene3D" id="2.20.28.20">
    <property type="entry name" value="Methionyl-tRNA synthetase, Zn-domain"/>
    <property type="match status" value="1"/>
</dbReference>
<dbReference type="Gene3D" id="2.40.50.140">
    <property type="entry name" value="Nucleic acid-binding proteins"/>
    <property type="match status" value="1"/>
</dbReference>
<dbReference type="HAMAP" id="MF_00098">
    <property type="entry name" value="Met_tRNA_synth_type1"/>
    <property type="match status" value="1"/>
</dbReference>
<dbReference type="InterPro" id="IPR001412">
    <property type="entry name" value="aa-tRNA-synth_I_CS"/>
</dbReference>
<dbReference type="InterPro" id="IPR041872">
    <property type="entry name" value="Anticodon_Met"/>
</dbReference>
<dbReference type="InterPro" id="IPR004495">
    <property type="entry name" value="Met-tRNA-synth_bsu_C"/>
</dbReference>
<dbReference type="InterPro" id="IPR023458">
    <property type="entry name" value="Met-tRNA_ligase_1"/>
</dbReference>
<dbReference type="InterPro" id="IPR014758">
    <property type="entry name" value="Met-tRNA_synth"/>
</dbReference>
<dbReference type="InterPro" id="IPR015413">
    <property type="entry name" value="Methionyl/Leucyl_tRNA_Synth"/>
</dbReference>
<dbReference type="InterPro" id="IPR033911">
    <property type="entry name" value="MetRS_core"/>
</dbReference>
<dbReference type="InterPro" id="IPR029038">
    <property type="entry name" value="MetRS_Zn"/>
</dbReference>
<dbReference type="InterPro" id="IPR012340">
    <property type="entry name" value="NA-bd_OB-fold"/>
</dbReference>
<dbReference type="InterPro" id="IPR014729">
    <property type="entry name" value="Rossmann-like_a/b/a_fold"/>
</dbReference>
<dbReference type="InterPro" id="IPR002547">
    <property type="entry name" value="tRNA-bd_dom"/>
</dbReference>
<dbReference type="InterPro" id="IPR009080">
    <property type="entry name" value="tRNAsynth_Ia_anticodon-bd"/>
</dbReference>
<dbReference type="NCBIfam" id="TIGR00398">
    <property type="entry name" value="metG"/>
    <property type="match status" value="1"/>
</dbReference>
<dbReference type="NCBIfam" id="TIGR00399">
    <property type="entry name" value="metG_C_term"/>
    <property type="match status" value="1"/>
</dbReference>
<dbReference type="NCBIfam" id="NF001100">
    <property type="entry name" value="PRK00133.1"/>
    <property type="match status" value="1"/>
</dbReference>
<dbReference type="PANTHER" id="PTHR45765">
    <property type="entry name" value="METHIONINE--TRNA LIGASE"/>
    <property type="match status" value="1"/>
</dbReference>
<dbReference type="PANTHER" id="PTHR45765:SF1">
    <property type="entry name" value="METHIONINE--TRNA LIGASE, CYTOPLASMIC"/>
    <property type="match status" value="1"/>
</dbReference>
<dbReference type="Pfam" id="PF19303">
    <property type="entry name" value="Anticodon_3"/>
    <property type="match status" value="1"/>
</dbReference>
<dbReference type="Pfam" id="PF09334">
    <property type="entry name" value="tRNA-synt_1g"/>
    <property type="match status" value="1"/>
</dbReference>
<dbReference type="Pfam" id="PF01588">
    <property type="entry name" value="tRNA_bind"/>
    <property type="match status" value="1"/>
</dbReference>
<dbReference type="PRINTS" id="PR01041">
    <property type="entry name" value="TRNASYNTHMET"/>
</dbReference>
<dbReference type="SUPFAM" id="SSF47323">
    <property type="entry name" value="Anticodon-binding domain of a subclass of class I aminoacyl-tRNA synthetases"/>
    <property type="match status" value="1"/>
</dbReference>
<dbReference type="SUPFAM" id="SSF57770">
    <property type="entry name" value="Methionyl-tRNA synthetase (MetRS), Zn-domain"/>
    <property type="match status" value="1"/>
</dbReference>
<dbReference type="SUPFAM" id="SSF50249">
    <property type="entry name" value="Nucleic acid-binding proteins"/>
    <property type="match status" value="1"/>
</dbReference>
<dbReference type="SUPFAM" id="SSF52374">
    <property type="entry name" value="Nucleotidylyl transferase"/>
    <property type="match status" value="1"/>
</dbReference>
<dbReference type="PROSITE" id="PS00178">
    <property type="entry name" value="AA_TRNA_LIGASE_I"/>
    <property type="match status" value="1"/>
</dbReference>
<dbReference type="PROSITE" id="PS50886">
    <property type="entry name" value="TRBD"/>
    <property type="match status" value="1"/>
</dbReference>
<name>SYM_ECOK1</name>
<protein>
    <recommendedName>
        <fullName evidence="1">Methionine--tRNA ligase</fullName>
        <ecNumber evidence="1">6.1.1.10</ecNumber>
    </recommendedName>
    <alternativeName>
        <fullName evidence="1">Methionyl-tRNA synthetase</fullName>
        <shortName evidence="1">MetRS</shortName>
    </alternativeName>
</protein>
<keyword id="KW-0030">Aminoacyl-tRNA synthetase</keyword>
<keyword id="KW-0067">ATP-binding</keyword>
<keyword id="KW-0963">Cytoplasm</keyword>
<keyword id="KW-0436">Ligase</keyword>
<keyword id="KW-0479">Metal-binding</keyword>
<keyword id="KW-0547">Nucleotide-binding</keyword>
<keyword id="KW-0648">Protein biosynthesis</keyword>
<keyword id="KW-1185">Reference proteome</keyword>
<keyword id="KW-0694">RNA-binding</keyword>
<keyword id="KW-0820">tRNA-binding</keyword>
<keyword id="KW-0862">Zinc</keyword>
<proteinExistence type="inferred from homology"/>
<feature type="chain" id="PRO_0000331820" description="Methionine--tRNA ligase">
    <location>
        <begin position="1"/>
        <end position="677"/>
    </location>
</feature>
<feature type="domain" description="tRNA-binding" evidence="1">
    <location>
        <begin position="575"/>
        <end position="677"/>
    </location>
</feature>
<feature type="short sequence motif" description="'HIGH' region">
    <location>
        <begin position="15"/>
        <end position="25"/>
    </location>
</feature>
<feature type="short sequence motif" description="'KMSKS' region">
    <location>
        <begin position="333"/>
        <end position="337"/>
    </location>
</feature>
<feature type="binding site" evidence="1">
    <location>
        <position position="146"/>
    </location>
    <ligand>
        <name>Zn(2+)</name>
        <dbReference type="ChEBI" id="CHEBI:29105"/>
    </ligand>
</feature>
<feature type="binding site" evidence="1">
    <location>
        <position position="149"/>
    </location>
    <ligand>
        <name>Zn(2+)</name>
        <dbReference type="ChEBI" id="CHEBI:29105"/>
    </ligand>
</feature>
<feature type="binding site" evidence="1">
    <location>
        <position position="159"/>
    </location>
    <ligand>
        <name>Zn(2+)</name>
        <dbReference type="ChEBI" id="CHEBI:29105"/>
    </ligand>
</feature>
<feature type="binding site" evidence="1">
    <location>
        <position position="162"/>
    </location>
    <ligand>
        <name>Zn(2+)</name>
        <dbReference type="ChEBI" id="CHEBI:29105"/>
    </ligand>
</feature>
<feature type="binding site" evidence="1">
    <location>
        <position position="336"/>
    </location>
    <ligand>
        <name>ATP</name>
        <dbReference type="ChEBI" id="CHEBI:30616"/>
    </ligand>
</feature>
<organism>
    <name type="scientific">Escherichia coli O1:K1 / APEC</name>
    <dbReference type="NCBI Taxonomy" id="405955"/>
    <lineage>
        <taxon>Bacteria</taxon>
        <taxon>Pseudomonadati</taxon>
        <taxon>Pseudomonadota</taxon>
        <taxon>Gammaproteobacteria</taxon>
        <taxon>Enterobacterales</taxon>
        <taxon>Enterobacteriaceae</taxon>
        <taxon>Escherichia</taxon>
    </lineage>
</organism>